<comment type="similarity">
    <text evidence="1">Belongs to the universal ribosomal protein uS2 family.</text>
</comment>
<name>RS2_BACFR</name>
<accession>Q64P29</accession>
<keyword id="KW-0687">Ribonucleoprotein</keyword>
<keyword id="KW-0689">Ribosomal protein</keyword>
<proteinExistence type="inferred from homology"/>
<dbReference type="EMBL" id="AP006841">
    <property type="protein sequence ID" value="BAD50753.1"/>
    <property type="molecule type" value="Genomic_DNA"/>
</dbReference>
<dbReference type="RefSeq" id="WP_005791748.1">
    <property type="nucleotide sequence ID" value="NZ_UYXF01000013.1"/>
</dbReference>
<dbReference type="RefSeq" id="YP_101287.1">
    <property type="nucleotide sequence ID" value="NC_006347.1"/>
</dbReference>
<dbReference type="SMR" id="Q64P29"/>
<dbReference type="STRING" id="295405.BF4011"/>
<dbReference type="GeneID" id="60369975"/>
<dbReference type="KEGG" id="bfr:BF4011"/>
<dbReference type="PATRIC" id="fig|295405.11.peg.3860"/>
<dbReference type="HOGENOM" id="CLU_040318_0_2_10"/>
<dbReference type="OrthoDB" id="9808036at2"/>
<dbReference type="Proteomes" id="UP000002197">
    <property type="component" value="Chromosome"/>
</dbReference>
<dbReference type="GO" id="GO:0022627">
    <property type="term" value="C:cytosolic small ribosomal subunit"/>
    <property type="evidence" value="ECO:0007669"/>
    <property type="project" value="TreeGrafter"/>
</dbReference>
<dbReference type="GO" id="GO:0003735">
    <property type="term" value="F:structural constituent of ribosome"/>
    <property type="evidence" value="ECO:0007669"/>
    <property type="project" value="InterPro"/>
</dbReference>
<dbReference type="GO" id="GO:0006412">
    <property type="term" value="P:translation"/>
    <property type="evidence" value="ECO:0007669"/>
    <property type="project" value="UniProtKB-UniRule"/>
</dbReference>
<dbReference type="CDD" id="cd01425">
    <property type="entry name" value="RPS2"/>
    <property type="match status" value="1"/>
</dbReference>
<dbReference type="FunFam" id="1.10.287.610:FF:000001">
    <property type="entry name" value="30S ribosomal protein S2"/>
    <property type="match status" value="1"/>
</dbReference>
<dbReference type="Gene3D" id="3.40.50.10490">
    <property type="entry name" value="Glucose-6-phosphate isomerase like protein, domain 1"/>
    <property type="match status" value="1"/>
</dbReference>
<dbReference type="Gene3D" id="1.10.287.610">
    <property type="entry name" value="Helix hairpin bin"/>
    <property type="match status" value="1"/>
</dbReference>
<dbReference type="HAMAP" id="MF_00291_B">
    <property type="entry name" value="Ribosomal_uS2_B"/>
    <property type="match status" value="1"/>
</dbReference>
<dbReference type="InterPro" id="IPR001865">
    <property type="entry name" value="Ribosomal_uS2"/>
</dbReference>
<dbReference type="InterPro" id="IPR005706">
    <property type="entry name" value="Ribosomal_uS2_bac/mit/plastid"/>
</dbReference>
<dbReference type="InterPro" id="IPR018130">
    <property type="entry name" value="Ribosomal_uS2_CS"/>
</dbReference>
<dbReference type="InterPro" id="IPR023591">
    <property type="entry name" value="Ribosomal_uS2_flav_dom_sf"/>
</dbReference>
<dbReference type="NCBIfam" id="TIGR01011">
    <property type="entry name" value="rpsB_bact"/>
    <property type="match status" value="1"/>
</dbReference>
<dbReference type="PANTHER" id="PTHR12534">
    <property type="entry name" value="30S RIBOSOMAL PROTEIN S2 PROKARYOTIC AND ORGANELLAR"/>
    <property type="match status" value="1"/>
</dbReference>
<dbReference type="PANTHER" id="PTHR12534:SF0">
    <property type="entry name" value="SMALL RIBOSOMAL SUBUNIT PROTEIN US2M"/>
    <property type="match status" value="1"/>
</dbReference>
<dbReference type="Pfam" id="PF00318">
    <property type="entry name" value="Ribosomal_S2"/>
    <property type="match status" value="1"/>
</dbReference>
<dbReference type="PRINTS" id="PR00395">
    <property type="entry name" value="RIBOSOMALS2"/>
</dbReference>
<dbReference type="SUPFAM" id="SSF52313">
    <property type="entry name" value="Ribosomal protein S2"/>
    <property type="match status" value="1"/>
</dbReference>
<dbReference type="PROSITE" id="PS00963">
    <property type="entry name" value="RIBOSOMAL_S2_2"/>
    <property type="match status" value="1"/>
</dbReference>
<evidence type="ECO:0000255" key="1">
    <source>
        <dbReference type="HAMAP-Rule" id="MF_00291"/>
    </source>
</evidence>
<evidence type="ECO:0000256" key="2">
    <source>
        <dbReference type="SAM" id="MobiDB-lite"/>
    </source>
</evidence>
<evidence type="ECO:0000305" key="3"/>
<feature type="chain" id="PRO_0000134126" description="Small ribosomal subunit protein uS2">
    <location>
        <begin position="1"/>
        <end position="278"/>
    </location>
</feature>
<feature type="region of interest" description="Disordered" evidence="2">
    <location>
        <begin position="233"/>
        <end position="258"/>
    </location>
</feature>
<sequence length="278" mass="30525">MSRTNFDTLLEAGCHFGHLKRKWNPAMAPYIFMERNGIHIIDLHKTVAKVDEAAEALKQIAKSGKKVLFVATKKQAKQVVAEKAASVNMPYVIERWPGGMLTNFPTIRKAVKKMTTIDKLTADGTYSNLSKREILQISRQRAKLDKTLGSIADLTRLPSALFVIDVMKENIAVREANRLGIPVFGIVDTNSDPTNIDFVIPANDDATKSVEVILDACCAAMIEGLEERKAEKIDMEAAGEAPANKGKKKSAKARLDKSDEEAINAAKAAAFLKEDEEA</sequence>
<protein>
    <recommendedName>
        <fullName evidence="1">Small ribosomal subunit protein uS2</fullName>
    </recommendedName>
    <alternativeName>
        <fullName evidence="3">30S ribosomal protein S2</fullName>
    </alternativeName>
</protein>
<gene>
    <name evidence="1" type="primary">rpsB</name>
    <name type="ordered locus">BF4011</name>
</gene>
<reference key="1">
    <citation type="journal article" date="2004" name="Proc. Natl. Acad. Sci. U.S.A.">
        <title>Genomic analysis of Bacteroides fragilis reveals extensive DNA inversions regulating cell surface adaptation.</title>
        <authorList>
            <person name="Kuwahara T."/>
            <person name="Yamashita A."/>
            <person name="Hirakawa H."/>
            <person name="Nakayama H."/>
            <person name="Toh H."/>
            <person name="Okada N."/>
            <person name="Kuhara S."/>
            <person name="Hattori M."/>
            <person name="Hayashi T."/>
            <person name="Ohnishi Y."/>
        </authorList>
    </citation>
    <scope>NUCLEOTIDE SEQUENCE [LARGE SCALE GENOMIC DNA]</scope>
    <source>
        <strain>YCH46</strain>
    </source>
</reference>
<organism>
    <name type="scientific">Bacteroides fragilis (strain YCH46)</name>
    <dbReference type="NCBI Taxonomy" id="295405"/>
    <lineage>
        <taxon>Bacteria</taxon>
        <taxon>Pseudomonadati</taxon>
        <taxon>Bacteroidota</taxon>
        <taxon>Bacteroidia</taxon>
        <taxon>Bacteroidales</taxon>
        <taxon>Bacteroidaceae</taxon>
        <taxon>Bacteroides</taxon>
    </lineage>
</organism>